<reference key="1">
    <citation type="journal article" date="2007" name="PLoS ONE">
        <title>Analysis of the neurotoxin complex genes in Clostridium botulinum A1-A4 and B1 strains: BoNT/A3, /Ba4 and /B1 clusters are located within plasmids.</title>
        <authorList>
            <person name="Smith T.J."/>
            <person name="Hill K.K."/>
            <person name="Foley B.T."/>
            <person name="Detter J.C."/>
            <person name="Munk A.C."/>
            <person name="Bruce D.C."/>
            <person name="Doggett N.A."/>
            <person name="Smith L.A."/>
            <person name="Marks J.D."/>
            <person name="Xie G."/>
            <person name="Brettin T.S."/>
        </authorList>
    </citation>
    <scope>NUCLEOTIDE SEQUENCE [LARGE SCALE GENOMIC DNA]</scope>
    <source>
        <strain>Okra / Type B1</strain>
    </source>
</reference>
<dbReference type="EMBL" id="CP000939">
    <property type="protein sequence ID" value="ACA45382.1"/>
    <property type="molecule type" value="Genomic_DNA"/>
</dbReference>
<dbReference type="RefSeq" id="WP_003357534.1">
    <property type="nucleotide sequence ID" value="NC_010516.1"/>
</dbReference>
<dbReference type="SMR" id="B1IGE2"/>
<dbReference type="GeneID" id="5187726"/>
<dbReference type="KEGG" id="cbb:CLD_1036"/>
<dbReference type="HOGENOM" id="CLU_061015_2_1_9"/>
<dbReference type="Proteomes" id="UP000008541">
    <property type="component" value="Chromosome"/>
</dbReference>
<dbReference type="GO" id="GO:1990904">
    <property type="term" value="C:ribonucleoprotein complex"/>
    <property type="evidence" value="ECO:0007669"/>
    <property type="project" value="UniProtKB-KW"/>
</dbReference>
<dbReference type="GO" id="GO:0005840">
    <property type="term" value="C:ribosome"/>
    <property type="evidence" value="ECO:0007669"/>
    <property type="project" value="UniProtKB-KW"/>
</dbReference>
<dbReference type="GO" id="GO:0019843">
    <property type="term" value="F:rRNA binding"/>
    <property type="evidence" value="ECO:0007669"/>
    <property type="project" value="UniProtKB-UniRule"/>
</dbReference>
<dbReference type="GO" id="GO:0003735">
    <property type="term" value="F:structural constituent of ribosome"/>
    <property type="evidence" value="ECO:0007669"/>
    <property type="project" value="InterPro"/>
</dbReference>
<dbReference type="GO" id="GO:0000049">
    <property type="term" value="F:tRNA binding"/>
    <property type="evidence" value="ECO:0007669"/>
    <property type="project" value="UniProtKB-UniRule"/>
</dbReference>
<dbReference type="GO" id="GO:0006412">
    <property type="term" value="P:translation"/>
    <property type="evidence" value="ECO:0007669"/>
    <property type="project" value="UniProtKB-UniRule"/>
</dbReference>
<dbReference type="FunFam" id="3.30.1440.10:FF:000001">
    <property type="entry name" value="50S ribosomal protein L5"/>
    <property type="match status" value="1"/>
</dbReference>
<dbReference type="Gene3D" id="3.30.1440.10">
    <property type="match status" value="1"/>
</dbReference>
<dbReference type="HAMAP" id="MF_01333_B">
    <property type="entry name" value="Ribosomal_uL5_B"/>
    <property type="match status" value="1"/>
</dbReference>
<dbReference type="InterPro" id="IPR002132">
    <property type="entry name" value="Ribosomal_uL5"/>
</dbReference>
<dbReference type="InterPro" id="IPR020930">
    <property type="entry name" value="Ribosomal_uL5_bac-type"/>
</dbReference>
<dbReference type="InterPro" id="IPR031309">
    <property type="entry name" value="Ribosomal_uL5_C"/>
</dbReference>
<dbReference type="InterPro" id="IPR020929">
    <property type="entry name" value="Ribosomal_uL5_CS"/>
</dbReference>
<dbReference type="InterPro" id="IPR022803">
    <property type="entry name" value="Ribosomal_uL5_dom_sf"/>
</dbReference>
<dbReference type="InterPro" id="IPR031310">
    <property type="entry name" value="Ribosomal_uL5_N"/>
</dbReference>
<dbReference type="NCBIfam" id="NF000585">
    <property type="entry name" value="PRK00010.1"/>
    <property type="match status" value="1"/>
</dbReference>
<dbReference type="PANTHER" id="PTHR11994">
    <property type="entry name" value="60S RIBOSOMAL PROTEIN L11-RELATED"/>
    <property type="match status" value="1"/>
</dbReference>
<dbReference type="Pfam" id="PF00281">
    <property type="entry name" value="Ribosomal_L5"/>
    <property type="match status" value="1"/>
</dbReference>
<dbReference type="Pfam" id="PF00673">
    <property type="entry name" value="Ribosomal_L5_C"/>
    <property type="match status" value="1"/>
</dbReference>
<dbReference type="PIRSF" id="PIRSF002161">
    <property type="entry name" value="Ribosomal_L5"/>
    <property type="match status" value="1"/>
</dbReference>
<dbReference type="SUPFAM" id="SSF55282">
    <property type="entry name" value="RL5-like"/>
    <property type="match status" value="1"/>
</dbReference>
<dbReference type="PROSITE" id="PS00358">
    <property type="entry name" value="RIBOSOMAL_L5"/>
    <property type="match status" value="1"/>
</dbReference>
<evidence type="ECO:0000255" key="1">
    <source>
        <dbReference type="HAMAP-Rule" id="MF_01333"/>
    </source>
</evidence>
<evidence type="ECO:0000305" key="2"/>
<organism>
    <name type="scientific">Clostridium botulinum (strain Okra / Type B1)</name>
    <dbReference type="NCBI Taxonomy" id="498213"/>
    <lineage>
        <taxon>Bacteria</taxon>
        <taxon>Bacillati</taxon>
        <taxon>Bacillota</taxon>
        <taxon>Clostridia</taxon>
        <taxon>Eubacteriales</taxon>
        <taxon>Clostridiaceae</taxon>
        <taxon>Clostridium</taxon>
    </lineage>
</organism>
<gene>
    <name evidence="1" type="primary">rplE</name>
    <name type="ordered locus">CLD_1036</name>
</gene>
<accession>B1IGE2</accession>
<name>RL5_CLOBK</name>
<comment type="function">
    <text evidence="1">This is one of the proteins that bind and probably mediate the attachment of the 5S RNA into the large ribosomal subunit, where it forms part of the central protuberance. In the 70S ribosome it contacts protein S13 of the 30S subunit (bridge B1b), connecting the 2 subunits; this bridge is implicated in subunit movement. Contacts the P site tRNA; the 5S rRNA and some of its associated proteins might help stabilize positioning of ribosome-bound tRNAs.</text>
</comment>
<comment type="subunit">
    <text evidence="1">Part of the 50S ribosomal subunit; part of the 5S rRNA/L5/L18/L25 subcomplex. Contacts the 5S rRNA and the P site tRNA. Forms a bridge to the 30S subunit in the 70S ribosome.</text>
</comment>
<comment type="similarity">
    <text evidence="1">Belongs to the universal ribosomal protein uL5 family.</text>
</comment>
<protein>
    <recommendedName>
        <fullName evidence="1">Large ribosomal subunit protein uL5</fullName>
    </recommendedName>
    <alternativeName>
        <fullName evidence="2">50S ribosomal protein L5</fullName>
    </alternativeName>
</protein>
<feature type="chain" id="PRO_1000142377" description="Large ribosomal subunit protein uL5">
    <location>
        <begin position="1"/>
        <end position="180"/>
    </location>
</feature>
<sequence>MMPRLQEKYEKEVVSALMDKFGYKNIMEVPKLEKIVINMGVGEAKENQKSLEAAVEDLAKITGQKPILTKAKKSVANFKIREDMPLGCKVTLRKQNMYEFADKLINVALPRVRDFSGVSSKSFDGRGNYAIGIKEQLIFPEIEFDKIDKIRGMDIIFVTTAKTDEEARELLRFLGMPFAR</sequence>
<keyword id="KW-0687">Ribonucleoprotein</keyword>
<keyword id="KW-0689">Ribosomal protein</keyword>
<keyword id="KW-0694">RNA-binding</keyword>
<keyword id="KW-0699">rRNA-binding</keyword>
<keyword id="KW-0820">tRNA-binding</keyword>
<proteinExistence type="inferred from homology"/>